<reference key="1">
    <citation type="journal article" date="2003" name="Genome Res.">
        <title>Comparative complete genome sequence analysis of the amino acid replacements responsible for the thermostability of Corynebacterium efficiens.</title>
        <authorList>
            <person name="Nishio Y."/>
            <person name="Nakamura Y."/>
            <person name="Kawarabayasi Y."/>
            <person name="Usuda Y."/>
            <person name="Kimura E."/>
            <person name="Sugimoto S."/>
            <person name="Matsui K."/>
            <person name="Yamagishi A."/>
            <person name="Kikuchi H."/>
            <person name="Ikeo K."/>
            <person name="Gojobori T."/>
        </authorList>
    </citation>
    <scope>NUCLEOTIDE SEQUENCE [LARGE SCALE GENOMIC DNA]</scope>
    <source>
        <strain>DSM 44549 / YS-314 / AJ 12310 / JCM 11189 / NBRC 100395</strain>
    </source>
</reference>
<keyword id="KW-0067">ATP-binding</keyword>
<keyword id="KW-0963">Cytoplasm</keyword>
<keyword id="KW-0324">Glycolysis</keyword>
<keyword id="KW-0418">Kinase</keyword>
<keyword id="KW-0547">Nucleotide-binding</keyword>
<keyword id="KW-1185">Reference proteome</keyword>
<keyword id="KW-0808">Transferase</keyword>
<accession>Q8FT66</accession>
<gene>
    <name evidence="1" type="primary">pgk</name>
    <name type="ordered locus">CE1705</name>
</gene>
<dbReference type="EC" id="2.7.2.3" evidence="1"/>
<dbReference type="EMBL" id="BA000035">
    <property type="protein sequence ID" value="BAC18515.1"/>
    <property type="molecule type" value="Genomic_DNA"/>
</dbReference>
<dbReference type="RefSeq" id="WP_006767706.1">
    <property type="nucleotide sequence ID" value="NC_004369.1"/>
</dbReference>
<dbReference type="SMR" id="Q8FT66"/>
<dbReference type="STRING" id="196164.gene:10742126"/>
<dbReference type="KEGG" id="cef:CE1705"/>
<dbReference type="eggNOG" id="COG0126">
    <property type="taxonomic scope" value="Bacteria"/>
</dbReference>
<dbReference type="HOGENOM" id="CLU_025427_0_2_11"/>
<dbReference type="OrthoDB" id="9808460at2"/>
<dbReference type="UniPathway" id="UPA00109">
    <property type="reaction ID" value="UER00185"/>
</dbReference>
<dbReference type="Proteomes" id="UP000001409">
    <property type="component" value="Chromosome"/>
</dbReference>
<dbReference type="GO" id="GO:0005829">
    <property type="term" value="C:cytosol"/>
    <property type="evidence" value="ECO:0007669"/>
    <property type="project" value="TreeGrafter"/>
</dbReference>
<dbReference type="GO" id="GO:0043531">
    <property type="term" value="F:ADP binding"/>
    <property type="evidence" value="ECO:0007669"/>
    <property type="project" value="TreeGrafter"/>
</dbReference>
<dbReference type="GO" id="GO:0005524">
    <property type="term" value="F:ATP binding"/>
    <property type="evidence" value="ECO:0007669"/>
    <property type="project" value="UniProtKB-KW"/>
</dbReference>
<dbReference type="GO" id="GO:0004618">
    <property type="term" value="F:phosphoglycerate kinase activity"/>
    <property type="evidence" value="ECO:0007669"/>
    <property type="project" value="UniProtKB-UniRule"/>
</dbReference>
<dbReference type="GO" id="GO:0006094">
    <property type="term" value="P:gluconeogenesis"/>
    <property type="evidence" value="ECO:0007669"/>
    <property type="project" value="TreeGrafter"/>
</dbReference>
<dbReference type="GO" id="GO:0006096">
    <property type="term" value="P:glycolytic process"/>
    <property type="evidence" value="ECO:0007669"/>
    <property type="project" value="UniProtKB-UniRule"/>
</dbReference>
<dbReference type="CDD" id="cd00318">
    <property type="entry name" value="Phosphoglycerate_kinase"/>
    <property type="match status" value="1"/>
</dbReference>
<dbReference type="FunFam" id="3.40.50.1260:FF:000006">
    <property type="entry name" value="Phosphoglycerate kinase"/>
    <property type="match status" value="1"/>
</dbReference>
<dbReference type="FunFam" id="3.40.50.1260:FF:000031">
    <property type="entry name" value="Phosphoglycerate kinase 1"/>
    <property type="match status" value="1"/>
</dbReference>
<dbReference type="Gene3D" id="3.40.50.1260">
    <property type="entry name" value="Phosphoglycerate kinase, N-terminal domain"/>
    <property type="match status" value="2"/>
</dbReference>
<dbReference type="HAMAP" id="MF_00145">
    <property type="entry name" value="Phosphoglyc_kinase"/>
    <property type="match status" value="1"/>
</dbReference>
<dbReference type="InterPro" id="IPR001576">
    <property type="entry name" value="Phosphoglycerate_kinase"/>
</dbReference>
<dbReference type="InterPro" id="IPR015911">
    <property type="entry name" value="Phosphoglycerate_kinase_CS"/>
</dbReference>
<dbReference type="InterPro" id="IPR015824">
    <property type="entry name" value="Phosphoglycerate_kinase_N"/>
</dbReference>
<dbReference type="InterPro" id="IPR036043">
    <property type="entry name" value="Phosphoglycerate_kinase_sf"/>
</dbReference>
<dbReference type="PANTHER" id="PTHR11406">
    <property type="entry name" value="PHOSPHOGLYCERATE KINASE"/>
    <property type="match status" value="1"/>
</dbReference>
<dbReference type="PANTHER" id="PTHR11406:SF23">
    <property type="entry name" value="PHOSPHOGLYCERATE KINASE 1, CHLOROPLASTIC-RELATED"/>
    <property type="match status" value="1"/>
</dbReference>
<dbReference type="Pfam" id="PF00162">
    <property type="entry name" value="PGK"/>
    <property type="match status" value="1"/>
</dbReference>
<dbReference type="PIRSF" id="PIRSF000724">
    <property type="entry name" value="Pgk"/>
    <property type="match status" value="1"/>
</dbReference>
<dbReference type="PRINTS" id="PR00477">
    <property type="entry name" value="PHGLYCKINASE"/>
</dbReference>
<dbReference type="SUPFAM" id="SSF53748">
    <property type="entry name" value="Phosphoglycerate kinase"/>
    <property type="match status" value="1"/>
</dbReference>
<dbReference type="PROSITE" id="PS00111">
    <property type="entry name" value="PGLYCERATE_KINASE"/>
    <property type="match status" value="1"/>
</dbReference>
<protein>
    <recommendedName>
        <fullName evidence="1">Phosphoglycerate kinase</fullName>
        <ecNumber evidence="1">2.7.2.3</ecNumber>
    </recommendedName>
</protein>
<name>PGK_COREF</name>
<evidence type="ECO:0000255" key="1">
    <source>
        <dbReference type="HAMAP-Rule" id="MF_00145"/>
    </source>
</evidence>
<proteinExistence type="inferred from homology"/>
<feature type="chain" id="PRO_0000145936" description="Phosphoglycerate kinase">
    <location>
        <begin position="1"/>
        <end position="405"/>
    </location>
</feature>
<feature type="binding site" evidence="1">
    <location>
        <begin position="24"/>
        <end position="26"/>
    </location>
    <ligand>
        <name>substrate</name>
    </ligand>
</feature>
<feature type="binding site" evidence="1">
    <location>
        <position position="40"/>
    </location>
    <ligand>
        <name>substrate</name>
    </ligand>
</feature>
<feature type="binding site" evidence="1">
    <location>
        <begin position="63"/>
        <end position="66"/>
    </location>
    <ligand>
        <name>substrate</name>
    </ligand>
</feature>
<feature type="binding site" evidence="1">
    <location>
        <position position="122"/>
    </location>
    <ligand>
        <name>substrate</name>
    </ligand>
</feature>
<feature type="binding site" evidence="1">
    <location>
        <position position="162"/>
    </location>
    <ligand>
        <name>substrate</name>
    </ligand>
</feature>
<feature type="binding site" evidence="1">
    <location>
        <position position="212"/>
    </location>
    <ligand>
        <name>ATP</name>
        <dbReference type="ChEBI" id="CHEBI:30616"/>
    </ligand>
</feature>
<feature type="binding site" evidence="1">
    <location>
        <position position="331"/>
    </location>
    <ligand>
        <name>ATP</name>
        <dbReference type="ChEBI" id="CHEBI:30616"/>
    </ligand>
</feature>
<feature type="binding site" evidence="1">
    <location>
        <begin position="361"/>
        <end position="364"/>
    </location>
    <ligand>
        <name>ATP</name>
        <dbReference type="ChEBI" id="CHEBI:30616"/>
    </ligand>
</feature>
<comment type="catalytic activity">
    <reaction evidence="1">
        <text>(2R)-3-phosphoglycerate + ATP = (2R)-3-phospho-glyceroyl phosphate + ADP</text>
        <dbReference type="Rhea" id="RHEA:14801"/>
        <dbReference type="ChEBI" id="CHEBI:30616"/>
        <dbReference type="ChEBI" id="CHEBI:57604"/>
        <dbReference type="ChEBI" id="CHEBI:58272"/>
        <dbReference type="ChEBI" id="CHEBI:456216"/>
        <dbReference type="EC" id="2.7.2.3"/>
    </reaction>
</comment>
<comment type="pathway">
    <text evidence="1">Carbohydrate degradation; glycolysis; pyruvate from D-glyceraldehyde 3-phosphate: step 2/5.</text>
</comment>
<comment type="subunit">
    <text evidence="1">Monomer.</text>
</comment>
<comment type="subcellular location">
    <subcellularLocation>
        <location evidence="1">Cytoplasm</location>
    </subcellularLocation>
</comment>
<comment type="similarity">
    <text evidence="1">Belongs to the phosphoglycerate kinase family.</text>
</comment>
<sequence length="405" mass="43078">MAVKTLKDLLDEGVDGRHVIVRSDFNVPLNDDREITDKGRIIASLPTLKALTEAGAKVIVMSHLGRPKGEVNEKYSLAPVAEALSDELGQYVALAADVVGEDAHERANGLTEGDILLLENVRFDPRETSKDEAERGAFADELAALAADNGAFVSDGFGVVHRAQTSVYDIAKRLPHYAGRLVENEISVLEKIAENPEAPYTVVLGGSKVSDKLGVIEALASKADSIIIGGGMCYTFLKAQGHDVQKSMLQDEMIDTCKDLLERFGDKIVLPVDLTWASEFAKDAEKKVTDLDSAPEGWLSLDIGPKSVEKFADVLGASKTIFWNGPMGVFEFEAFSDGTRGVAQAIIDATANNGAFSVVGGGDSAASVRVLGLDEEGFSHISTGGGASLEFLEGKELPGVAILKD</sequence>
<organism>
    <name type="scientific">Corynebacterium efficiens (strain DSM 44549 / YS-314 / AJ 12310 / JCM 11189 / NBRC 100395)</name>
    <dbReference type="NCBI Taxonomy" id="196164"/>
    <lineage>
        <taxon>Bacteria</taxon>
        <taxon>Bacillati</taxon>
        <taxon>Actinomycetota</taxon>
        <taxon>Actinomycetes</taxon>
        <taxon>Mycobacteriales</taxon>
        <taxon>Corynebacteriaceae</taxon>
        <taxon>Corynebacterium</taxon>
    </lineage>
</organism>